<reference key="1">
    <citation type="journal article" date="2009" name="PLoS Pathog.">
        <title>Genomic evidence for the evolution of Streptococcus equi: host restriction, increased virulence, and genetic exchange with human pathogens.</title>
        <authorList>
            <person name="Holden M.T.G."/>
            <person name="Heather Z."/>
            <person name="Paillot R."/>
            <person name="Steward K.F."/>
            <person name="Webb K."/>
            <person name="Ainslie F."/>
            <person name="Jourdan T."/>
            <person name="Bason N.C."/>
            <person name="Holroyd N.E."/>
            <person name="Mungall K."/>
            <person name="Quail M.A."/>
            <person name="Sanders M."/>
            <person name="Simmonds M."/>
            <person name="Willey D."/>
            <person name="Brooks K."/>
            <person name="Aanensen D.M."/>
            <person name="Spratt B.G."/>
            <person name="Jolley K.A."/>
            <person name="Maiden M.C.J."/>
            <person name="Kehoe M."/>
            <person name="Chanter N."/>
            <person name="Bentley S.D."/>
            <person name="Robinson C."/>
            <person name="Maskell D.J."/>
            <person name="Parkhill J."/>
            <person name="Waller A.S."/>
        </authorList>
    </citation>
    <scope>NUCLEOTIDE SEQUENCE [LARGE SCALE GENOMIC DNA]</scope>
    <source>
        <strain>4047</strain>
    </source>
</reference>
<name>RL35_STRE4</name>
<proteinExistence type="inferred from homology"/>
<evidence type="ECO:0000255" key="1">
    <source>
        <dbReference type="HAMAP-Rule" id="MF_00514"/>
    </source>
</evidence>
<evidence type="ECO:0000256" key="2">
    <source>
        <dbReference type="SAM" id="MobiDB-lite"/>
    </source>
</evidence>
<evidence type="ECO:0000305" key="3"/>
<sequence>MPKQKTHRASAKRFKRTGSGGLKRFRAFTSHRFHGKTKKQRRHLRKAGMVHAGDFKRIKAMVTGL</sequence>
<gene>
    <name evidence="1" type="primary">rpmI</name>
    <name type="ordered locus">SEQ_0982</name>
</gene>
<dbReference type="EMBL" id="FM204883">
    <property type="protein sequence ID" value="CAW93546.1"/>
    <property type="molecule type" value="Genomic_DNA"/>
</dbReference>
<dbReference type="RefSeq" id="WP_012515490.1">
    <property type="nucleotide sequence ID" value="NC_012471.1"/>
</dbReference>
<dbReference type="SMR" id="C0M8T0"/>
<dbReference type="GeneID" id="83704734"/>
<dbReference type="KEGG" id="seu:SEQ_0982"/>
<dbReference type="HOGENOM" id="CLU_169643_3_1_9"/>
<dbReference type="OrthoDB" id="47476at2"/>
<dbReference type="Proteomes" id="UP000001365">
    <property type="component" value="Chromosome"/>
</dbReference>
<dbReference type="GO" id="GO:0022625">
    <property type="term" value="C:cytosolic large ribosomal subunit"/>
    <property type="evidence" value="ECO:0007669"/>
    <property type="project" value="TreeGrafter"/>
</dbReference>
<dbReference type="GO" id="GO:0003735">
    <property type="term" value="F:structural constituent of ribosome"/>
    <property type="evidence" value="ECO:0007669"/>
    <property type="project" value="InterPro"/>
</dbReference>
<dbReference type="GO" id="GO:0006412">
    <property type="term" value="P:translation"/>
    <property type="evidence" value="ECO:0007669"/>
    <property type="project" value="UniProtKB-UniRule"/>
</dbReference>
<dbReference type="FunFam" id="4.10.410.60:FF:000001">
    <property type="entry name" value="50S ribosomal protein L35"/>
    <property type="match status" value="1"/>
</dbReference>
<dbReference type="Gene3D" id="4.10.410.60">
    <property type="match status" value="1"/>
</dbReference>
<dbReference type="HAMAP" id="MF_00514">
    <property type="entry name" value="Ribosomal_bL35"/>
    <property type="match status" value="1"/>
</dbReference>
<dbReference type="InterPro" id="IPR001706">
    <property type="entry name" value="Ribosomal_bL35"/>
</dbReference>
<dbReference type="InterPro" id="IPR021137">
    <property type="entry name" value="Ribosomal_bL35-like"/>
</dbReference>
<dbReference type="InterPro" id="IPR018265">
    <property type="entry name" value="Ribosomal_bL35_CS"/>
</dbReference>
<dbReference type="InterPro" id="IPR037229">
    <property type="entry name" value="Ribosomal_bL35_sf"/>
</dbReference>
<dbReference type="NCBIfam" id="TIGR00001">
    <property type="entry name" value="rpmI_bact"/>
    <property type="match status" value="1"/>
</dbReference>
<dbReference type="PANTHER" id="PTHR33343">
    <property type="entry name" value="54S RIBOSOMAL PROTEIN BL35M"/>
    <property type="match status" value="1"/>
</dbReference>
<dbReference type="PANTHER" id="PTHR33343:SF1">
    <property type="entry name" value="LARGE RIBOSOMAL SUBUNIT PROTEIN BL35M"/>
    <property type="match status" value="1"/>
</dbReference>
<dbReference type="Pfam" id="PF01632">
    <property type="entry name" value="Ribosomal_L35p"/>
    <property type="match status" value="1"/>
</dbReference>
<dbReference type="PRINTS" id="PR00064">
    <property type="entry name" value="RIBOSOMALL35"/>
</dbReference>
<dbReference type="SUPFAM" id="SSF143034">
    <property type="entry name" value="L35p-like"/>
    <property type="match status" value="1"/>
</dbReference>
<dbReference type="PROSITE" id="PS00936">
    <property type="entry name" value="RIBOSOMAL_L35"/>
    <property type="match status" value="1"/>
</dbReference>
<keyword id="KW-0687">Ribonucleoprotein</keyword>
<keyword id="KW-0689">Ribosomal protein</keyword>
<organism>
    <name type="scientific">Streptococcus equi subsp. equi (strain 4047)</name>
    <dbReference type="NCBI Taxonomy" id="553482"/>
    <lineage>
        <taxon>Bacteria</taxon>
        <taxon>Bacillati</taxon>
        <taxon>Bacillota</taxon>
        <taxon>Bacilli</taxon>
        <taxon>Lactobacillales</taxon>
        <taxon>Streptococcaceae</taxon>
        <taxon>Streptococcus</taxon>
    </lineage>
</organism>
<feature type="chain" id="PRO_1000146159" description="Large ribosomal subunit protein bL35">
    <location>
        <begin position="1"/>
        <end position="65"/>
    </location>
</feature>
<feature type="region of interest" description="Disordered" evidence="2">
    <location>
        <begin position="1"/>
        <end position="20"/>
    </location>
</feature>
<feature type="compositionally biased region" description="Basic residues" evidence="2">
    <location>
        <begin position="1"/>
        <end position="16"/>
    </location>
</feature>
<protein>
    <recommendedName>
        <fullName evidence="1">Large ribosomal subunit protein bL35</fullName>
    </recommendedName>
    <alternativeName>
        <fullName evidence="3">50S ribosomal protein L35</fullName>
    </alternativeName>
</protein>
<accession>C0M8T0</accession>
<comment type="similarity">
    <text evidence="1">Belongs to the bacterial ribosomal protein bL35 family.</text>
</comment>